<sequence length="699" mass="77794">MSKINKLEHIRNIGICAHIDAGKTTTTERILYYTGKSHKIGEVHEGGATMDWMEQEQERGITITSAATTCRWQDKIINIIDTPGHVDFTIEVERSLRVLDGAVAVFDGVAGVEPQSETVWRQADKYNVPRMCFVNKMDRMGADFYRCVEMLKDRLGAKPLVIQLPVGIEENFKGIIDLIKMKAVIWKDEALGAEYFEEDIPADMKDKAEEYRAKLLDMVVELDDHVMEKYLSGEEVTAEEIKRLIRKGTISAAFYPVLCGSAFKNKGVQPLLDAVVDFLPSPIDIGIVKGMEVSTGEEKDFPISVTEPFAALRFKIMNDPFVGSLTFIRIYSGKITSGTTVINTVKNKREKIGRMLLMHANNREDVKEASAGDIVALAGLKDTTTGDTLSDIDQQVILERMEFPEPVIELAVEPKSTADQEKMGLALSRLAAEDPSFRVSTDYETGQTVIKGMGELHLEIIIDRMRREFKVEANIGAPQVAYRETITKVCEIDYTHKKQSGGAGQFARVKIIFEPLKEVKDLKDEDKNKNFVFESKIIGGAVPKEYIPGVEKGLNNIRETGVIAGYPMIDFKATLVDGAFHDVDSSVLAFEIAAKAAFREGMPKGNPKLLEPIMQVEVITPDEYMGDIIGDLNSRRGQIQSMDPRGNAQVVTANVPLAEMFGYVNTLRSLSQGRAQFSMIFSHYDQVPSQVADIIKAKK</sequence>
<organism>
    <name type="scientific">Rickettsia rickettsii</name>
    <dbReference type="NCBI Taxonomy" id="783"/>
    <lineage>
        <taxon>Bacteria</taxon>
        <taxon>Pseudomonadati</taxon>
        <taxon>Pseudomonadota</taxon>
        <taxon>Alphaproteobacteria</taxon>
        <taxon>Rickettsiales</taxon>
        <taxon>Rickettsiaceae</taxon>
        <taxon>Rickettsieae</taxon>
        <taxon>Rickettsia</taxon>
        <taxon>spotted fever group</taxon>
    </lineage>
</organism>
<protein>
    <recommendedName>
        <fullName evidence="1">Elongation factor G</fullName>
        <shortName evidence="1">EF-G</shortName>
    </recommendedName>
</protein>
<reference key="1">
    <citation type="journal article" date="2002" name="Mol. Biol. Evol.">
        <title>Proliferation and deterioration of Rickettsia palindromic elements.</title>
        <authorList>
            <person name="Amiri H."/>
            <person name="Alsmark C.M."/>
            <person name="Andersson S.G.E."/>
        </authorList>
    </citation>
    <scope>NUCLEOTIDE SEQUENCE [GENOMIC DNA]</scope>
    <source>
        <strain>Sawtooth</strain>
    </source>
</reference>
<feature type="chain" id="PRO_0000091203" description="Elongation factor G">
    <location>
        <begin position="1"/>
        <end position="699"/>
    </location>
</feature>
<feature type="domain" description="tr-type G">
    <location>
        <begin position="8"/>
        <end position="283"/>
    </location>
</feature>
<feature type="binding site" evidence="1">
    <location>
        <begin position="17"/>
        <end position="24"/>
    </location>
    <ligand>
        <name>GTP</name>
        <dbReference type="ChEBI" id="CHEBI:37565"/>
    </ligand>
</feature>
<feature type="binding site" evidence="1">
    <location>
        <begin position="81"/>
        <end position="85"/>
    </location>
    <ligand>
        <name>GTP</name>
        <dbReference type="ChEBI" id="CHEBI:37565"/>
    </ligand>
</feature>
<feature type="binding site" evidence="1">
    <location>
        <begin position="135"/>
        <end position="138"/>
    </location>
    <ligand>
        <name>GTP</name>
        <dbReference type="ChEBI" id="CHEBI:37565"/>
    </ligand>
</feature>
<comment type="function">
    <text evidence="1">Catalyzes the GTP-dependent ribosomal translocation step during translation elongation. During this step, the ribosome changes from the pre-translocational (PRE) to the post-translocational (POST) state as the newly formed A-site-bound peptidyl-tRNA and P-site-bound deacylated tRNA move to the P and E sites, respectively. Catalyzes the coordinated movement of the two tRNA molecules, the mRNA and conformational changes in the ribosome.</text>
</comment>
<comment type="subcellular location">
    <subcellularLocation>
        <location evidence="1">Cytoplasm</location>
    </subcellularLocation>
</comment>
<comment type="similarity">
    <text evidence="1">Belongs to the TRAFAC class translation factor GTPase superfamily. Classic translation factor GTPase family. EF-G/EF-2 subfamily.</text>
</comment>
<evidence type="ECO:0000255" key="1">
    <source>
        <dbReference type="HAMAP-Rule" id="MF_00054"/>
    </source>
</evidence>
<name>EFG_RICRI</name>
<accession>Q8KTC1</accession>
<dbReference type="EMBL" id="AF502170">
    <property type="protein sequence ID" value="AAM90913.1"/>
    <property type="molecule type" value="Genomic_DNA"/>
</dbReference>
<dbReference type="SMR" id="Q8KTC1"/>
<dbReference type="GO" id="GO:0005737">
    <property type="term" value="C:cytoplasm"/>
    <property type="evidence" value="ECO:0007669"/>
    <property type="project" value="UniProtKB-SubCell"/>
</dbReference>
<dbReference type="GO" id="GO:0005525">
    <property type="term" value="F:GTP binding"/>
    <property type="evidence" value="ECO:0007669"/>
    <property type="project" value="UniProtKB-UniRule"/>
</dbReference>
<dbReference type="GO" id="GO:0003924">
    <property type="term" value="F:GTPase activity"/>
    <property type="evidence" value="ECO:0007669"/>
    <property type="project" value="InterPro"/>
</dbReference>
<dbReference type="GO" id="GO:0003746">
    <property type="term" value="F:translation elongation factor activity"/>
    <property type="evidence" value="ECO:0007669"/>
    <property type="project" value="UniProtKB-UniRule"/>
</dbReference>
<dbReference type="GO" id="GO:0032790">
    <property type="term" value="P:ribosome disassembly"/>
    <property type="evidence" value="ECO:0007669"/>
    <property type="project" value="TreeGrafter"/>
</dbReference>
<dbReference type="CDD" id="cd01886">
    <property type="entry name" value="EF-G"/>
    <property type="match status" value="1"/>
</dbReference>
<dbReference type="CDD" id="cd16262">
    <property type="entry name" value="EFG_III"/>
    <property type="match status" value="1"/>
</dbReference>
<dbReference type="CDD" id="cd01434">
    <property type="entry name" value="EFG_mtEFG1_IV"/>
    <property type="match status" value="1"/>
</dbReference>
<dbReference type="CDD" id="cd03713">
    <property type="entry name" value="EFG_mtEFG_C"/>
    <property type="match status" value="1"/>
</dbReference>
<dbReference type="CDD" id="cd04088">
    <property type="entry name" value="EFG_mtEFG_II"/>
    <property type="match status" value="1"/>
</dbReference>
<dbReference type="FunFam" id="2.40.30.10:FF:000006">
    <property type="entry name" value="Elongation factor G"/>
    <property type="match status" value="1"/>
</dbReference>
<dbReference type="FunFam" id="3.30.230.10:FF:000003">
    <property type="entry name" value="Elongation factor G"/>
    <property type="match status" value="1"/>
</dbReference>
<dbReference type="FunFam" id="3.30.70.240:FF:000001">
    <property type="entry name" value="Elongation factor G"/>
    <property type="match status" value="1"/>
</dbReference>
<dbReference type="FunFam" id="3.30.70.870:FF:000001">
    <property type="entry name" value="Elongation factor G"/>
    <property type="match status" value="1"/>
</dbReference>
<dbReference type="FunFam" id="3.40.50.300:FF:000029">
    <property type="entry name" value="Elongation factor G"/>
    <property type="match status" value="1"/>
</dbReference>
<dbReference type="Gene3D" id="3.30.230.10">
    <property type="match status" value="1"/>
</dbReference>
<dbReference type="Gene3D" id="3.30.70.240">
    <property type="match status" value="1"/>
</dbReference>
<dbReference type="Gene3D" id="3.30.70.870">
    <property type="entry name" value="Elongation Factor G (Translational Gtpase), domain 3"/>
    <property type="match status" value="1"/>
</dbReference>
<dbReference type="Gene3D" id="3.40.50.300">
    <property type="entry name" value="P-loop containing nucleotide triphosphate hydrolases"/>
    <property type="match status" value="1"/>
</dbReference>
<dbReference type="Gene3D" id="2.40.30.10">
    <property type="entry name" value="Translation factors"/>
    <property type="match status" value="1"/>
</dbReference>
<dbReference type="HAMAP" id="MF_00054_B">
    <property type="entry name" value="EF_G_EF_2_B"/>
    <property type="match status" value="1"/>
</dbReference>
<dbReference type="InterPro" id="IPR053905">
    <property type="entry name" value="EF-G-like_DII"/>
</dbReference>
<dbReference type="InterPro" id="IPR041095">
    <property type="entry name" value="EFG_II"/>
</dbReference>
<dbReference type="InterPro" id="IPR009022">
    <property type="entry name" value="EFG_III"/>
</dbReference>
<dbReference type="InterPro" id="IPR035647">
    <property type="entry name" value="EFG_III/V"/>
</dbReference>
<dbReference type="InterPro" id="IPR047872">
    <property type="entry name" value="EFG_IV"/>
</dbReference>
<dbReference type="InterPro" id="IPR035649">
    <property type="entry name" value="EFG_V"/>
</dbReference>
<dbReference type="InterPro" id="IPR000640">
    <property type="entry name" value="EFG_V-like"/>
</dbReference>
<dbReference type="InterPro" id="IPR031157">
    <property type="entry name" value="G_TR_CS"/>
</dbReference>
<dbReference type="InterPro" id="IPR027417">
    <property type="entry name" value="P-loop_NTPase"/>
</dbReference>
<dbReference type="InterPro" id="IPR020568">
    <property type="entry name" value="Ribosomal_Su5_D2-typ_SF"/>
</dbReference>
<dbReference type="InterPro" id="IPR014721">
    <property type="entry name" value="Ribsml_uS5_D2-typ_fold_subgr"/>
</dbReference>
<dbReference type="InterPro" id="IPR005225">
    <property type="entry name" value="Small_GTP-bd"/>
</dbReference>
<dbReference type="InterPro" id="IPR000795">
    <property type="entry name" value="T_Tr_GTP-bd_dom"/>
</dbReference>
<dbReference type="InterPro" id="IPR009000">
    <property type="entry name" value="Transl_B-barrel_sf"/>
</dbReference>
<dbReference type="InterPro" id="IPR004540">
    <property type="entry name" value="Transl_elong_EFG/EF2"/>
</dbReference>
<dbReference type="InterPro" id="IPR005517">
    <property type="entry name" value="Transl_elong_EFG/EF2_IV"/>
</dbReference>
<dbReference type="NCBIfam" id="TIGR00484">
    <property type="entry name" value="EF-G"/>
    <property type="match status" value="1"/>
</dbReference>
<dbReference type="NCBIfam" id="NF009381">
    <property type="entry name" value="PRK12740.1-5"/>
    <property type="match status" value="1"/>
</dbReference>
<dbReference type="NCBIfam" id="TIGR00231">
    <property type="entry name" value="small_GTP"/>
    <property type="match status" value="1"/>
</dbReference>
<dbReference type="PANTHER" id="PTHR43261:SF1">
    <property type="entry name" value="RIBOSOME-RELEASING FACTOR 2, MITOCHONDRIAL"/>
    <property type="match status" value="1"/>
</dbReference>
<dbReference type="PANTHER" id="PTHR43261">
    <property type="entry name" value="TRANSLATION ELONGATION FACTOR G-RELATED"/>
    <property type="match status" value="1"/>
</dbReference>
<dbReference type="Pfam" id="PF22042">
    <property type="entry name" value="EF-G_D2"/>
    <property type="match status" value="1"/>
</dbReference>
<dbReference type="Pfam" id="PF00679">
    <property type="entry name" value="EFG_C"/>
    <property type="match status" value="1"/>
</dbReference>
<dbReference type="Pfam" id="PF14492">
    <property type="entry name" value="EFG_III"/>
    <property type="match status" value="1"/>
</dbReference>
<dbReference type="Pfam" id="PF03764">
    <property type="entry name" value="EFG_IV"/>
    <property type="match status" value="1"/>
</dbReference>
<dbReference type="Pfam" id="PF00009">
    <property type="entry name" value="GTP_EFTU"/>
    <property type="match status" value="1"/>
</dbReference>
<dbReference type="PRINTS" id="PR00315">
    <property type="entry name" value="ELONGATNFCT"/>
</dbReference>
<dbReference type="SMART" id="SM00838">
    <property type="entry name" value="EFG_C"/>
    <property type="match status" value="1"/>
</dbReference>
<dbReference type="SMART" id="SM00889">
    <property type="entry name" value="EFG_IV"/>
    <property type="match status" value="1"/>
</dbReference>
<dbReference type="SUPFAM" id="SSF54980">
    <property type="entry name" value="EF-G C-terminal domain-like"/>
    <property type="match status" value="2"/>
</dbReference>
<dbReference type="SUPFAM" id="SSF52540">
    <property type="entry name" value="P-loop containing nucleoside triphosphate hydrolases"/>
    <property type="match status" value="1"/>
</dbReference>
<dbReference type="SUPFAM" id="SSF54211">
    <property type="entry name" value="Ribosomal protein S5 domain 2-like"/>
    <property type="match status" value="1"/>
</dbReference>
<dbReference type="SUPFAM" id="SSF50447">
    <property type="entry name" value="Translation proteins"/>
    <property type="match status" value="1"/>
</dbReference>
<dbReference type="PROSITE" id="PS00301">
    <property type="entry name" value="G_TR_1"/>
    <property type="match status" value="1"/>
</dbReference>
<dbReference type="PROSITE" id="PS51722">
    <property type="entry name" value="G_TR_2"/>
    <property type="match status" value="1"/>
</dbReference>
<keyword id="KW-0963">Cytoplasm</keyword>
<keyword id="KW-0251">Elongation factor</keyword>
<keyword id="KW-0342">GTP-binding</keyword>
<keyword id="KW-0547">Nucleotide-binding</keyword>
<keyword id="KW-0648">Protein biosynthesis</keyword>
<gene>
    <name evidence="1" type="primary">fusA</name>
</gene>
<proteinExistence type="inferred from homology"/>